<evidence type="ECO:0000255" key="1">
    <source>
        <dbReference type="HAMAP-Rule" id="MF_00358"/>
    </source>
</evidence>
<evidence type="ECO:0000305" key="2"/>
<reference key="1">
    <citation type="submission" date="2009-01" db="EMBL/GenBank/DDBJ databases">
        <title>Complete sequence of Geobacter sp. FRC-32.</title>
        <authorList>
            <consortium name="US DOE Joint Genome Institute"/>
            <person name="Lucas S."/>
            <person name="Copeland A."/>
            <person name="Lapidus A."/>
            <person name="Glavina del Rio T."/>
            <person name="Dalin E."/>
            <person name="Tice H."/>
            <person name="Bruce D."/>
            <person name="Goodwin L."/>
            <person name="Pitluck S."/>
            <person name="Saunders E."/>
            <person name="Brettin T."/>
            <person name="Detter J.C."/>
            <person name="Han C."/>
            <person name="Larimer F."/>
            <person name="Land M."/>
            <person name="Hauser L."/>
            <person name="Kyrpides N."/>
            <person name="Ovchinnikova G."/>
            <person name="Kostka J."/>
            <person name="Richardson P."/>
        </authorList>
    </citation>
    <scope>NUCLEOTIDE SEQUENCE [LARGE SCALE GENOMIC DNA]</scope>
    <source>
        <strain>DSM 22248 / JCM 15807 / FRC-32</strain>
    </source>
</reference>
<dbReference type="EMBL" id="CP001390">
    <property type="protein sequence ID" value="ACM19059.1"/>
    <property type="molecule type" value="Genomic_DNA"/>
</dbReference>
<dbReference type="RefSeq" id="WP_012645788.1">
    <property type="nucleotide sequence ID" value="NC_011979.1"/>
</dbReference>
<dbReference type="SMR" id="B9M0M2"/>
<dbReference type="STRING" id="316067.Geob_0695"/>
<dbReference type="KEGG" id="geo:Geob_0695"/>
<dbReference type="eggNOG" id="COG0828">
    <property type="taxonomic scope" value="Bacteria"/>
</dbReference>
<dbReference type="HOGENOM" id="CLU_159258_1_2_7"/>
<dbReference type="OrthoDB" id="9799244at2"/>
<dbReference type="Proteomes" id="UP000007721">
    <property type="component" value="Chromosome"/>
</dbReference>
<dbReference type="GO" id="GO:1990904">
    <property type="term" value="C:ribonucleoprotein complex"/>
    <property type="evidence" value="ECO:0007669"/>
    <property type="project" value="UniProtKB-KW"/>
</dbReference>
<dbReference type="GO" id="GO:0005840">
    <property type="term" value="C:ribosome"/>
    <property type="evidence" value="ECO:0007669"/>
    <property type="project" value="UniProtKB-KW"/>
</dbReference>
<dbReference type="GO" id="GO:0003735">
    <property type="term" value="F:structural constituent of ribosome"/>
    <property type="evidence" value="ECO:0007669"/>
    <property type="project" value="InterPro"/>
</dbReference>
<dbReference type="GO" id="GO:0006412">
    <property type="term" value="P:translation"/>
    <property type="evidence" value="ECO:0007669"/>
    <property type="project" value="UniProtKB-UniRule"/>
</dbReference>
<dbReference type="Gene3D" id="1.20.5.1150">
    <property type="entry name" value="Ribosomal protein S8"/>
    <property type="match status" value="1"/>
</dbReference>
<dbReference type="HAMAP" id="MF_00358">
    <property type="entry name" value="Ribosomal_bS21"/>
    <property type="match status" value="1"/>
</dbReference>
<dbReference type="InterPro" id="IPR001911">
    <property type="entry name" value="Ribosomal_bS21"/>
</dbReference>
<dbReference type="InterPro" id="IPR038380">
    <property type="entry name" value="Ribosomal_bS21_sf"/>
</dbReference>
<dbReference type="NCBIfam" id="TIGR00030">
    <property type="entry name" value="S21p"/>
    <property type="match status" value="1"/>
</dbReference>
<dbReference type="PANTHER" id="PTHR21109">
    <property type="entry name" value="MITOCHONDRIAL 28S RIBOSOMAL PROTEIN S21"/>
    <property type="match status" value="1"/>
</dbReference>
<dbReference type="PANTHER" id="PTHR21109:SF22">
    <property type="entry name" value="SMALL RIBOSOMAL SUBUNIT PROTEIN BS21"/>
    <property type="match status" value="1"/>
</dbReference>
<dbReference type="Pfam" id="PF01165">
    <property type="entry name" value="Ribosomal_S21"/>
    <property type="match status" value="1"/>
</dbReference>
<dbReference type="PRINTS" id="PR00976">
    <property type="entry name" value="RIBOSOMALS21"/>
</dbReference>
<organism>
    <name type="scientific">Geotalea daltonii (strain DSM 22248 / JCM 15807 / FRC-32)</name>
    <name type="common">Geobacter daltonii</name>
    <dbReference type="NCBI Taxonomy" id="316067"/>
    <lineage>
        <taxon>Bacteria</taxon>
        <taxon>Pseudomonadati</taxon>
        <taxon>Thermodesulfobacteriota</taxon>
        <taxon>Desulfuromonadia</taxon>
        <taxon>Geobacterales</taxon>
        <taxon>Geobacteraceae</taxon>
        <taxon>Geotalea</taxon>
    </lineage>
</organism>
<keyword id="KW-1185">Reference proteome</keyword>
<keyword id="KW-0687">Ribonucleoprotein</keyword>
<keyword id="KW-0689">Ribosomal protein</keyword>
<comment type="similarity">
    <text evidence="1">Belongs to the bacterial ribosomal protein bS21 family.</text>
</comment>
<name>RS21_GEODF</name>
<proteinExistence type="inferred from homology"/>
<gene>
    <name evidence="1" type="primary">rpsU</name>
    <name type="ordered locus">Geob_0695</name>
</gene>
<sequence length="65" mass="7649">MPGVRVKEAEPFELALKKFKKQCEKAGILSEVRKREHYEKPSIKKKKKAIAARKRALKKQRKMID</sequence>
<accession>B9M0M2</accession>
<protein>
    <recommendedName>
        <fullName evidence="1">Small ribosomal subunit protein bS21</fullName>
    </recommendedName>
    <alternativeName>
        <fullName evidence="2">30S ribosomal protein S21</fullName>
    </alternativeName>
</protein>
<feature type="chain" id="PRO_1000194294" description="Small ribosomal subunit protein bS21">
    <location>
        <begin position="1"/>
        <end position="65"/>
    </location>
</feature>